<reference key="1">
    <citation type="journal article" date="2004" name="Nat. Biotechnol.">
        <title>The genome sequence of the anaerobic, sulfate-reducing bacterium Desulfovibrio vulgaris Hildenborough.</title>
        <authorList>
            <person name="Heidelberg J.F."/>
            <person name="Seshadri R."/>
            <person name="Haveman S.A."/>
            <person name="Hemme C.L."/>
            <person name="Paulsen I.T."/>
            <person name="Kolonay J.F."/>
            <person name="Eisen J.A."/>
            <person name="Ward N.L."/>
            <person name="Methe B.A."/>
            <person name="Brinkac L.M."/>
            <person name="Daugherty S.C."/>
            <person name="DeBoy R.T."/>
            <person name="Dodson R.J."/>
            <person name="Durkin A.S."/>
            <person name="Madupu R."/>
            <person name="Nelson W.C."/>
            <person name="Sullivan S.A."/>
            <person name="Fouts D.E."/>
            <person name="Haft D.H."/>
            <person name="Selengut J."/>
            <person name="Peterson J.D."/>
            <person name="Davidsen T.M."/>
            <person name="Zafar N."/>
            <person name="Zhou L."/>
            <person name="Radune D."/>
            <person name="Dimitrov G."/>
            <person name="Hance M."/>
            <person name="Tran K."/>
            <person name="Khouri H.M."/>
            <person name="Gill J."/>
            <person name="Utterback T.R."/>
            <person name="Feldblyum T.V."/>
            <person name="Wall J.D."/>
            <person name="Voordouw G."/>
            <person name="Fraser C.M."/>
        </authorList>
    </citation>
    <scope>NUCLEOTIDE SEQUENCE [LARGE SCALE GENOMIC DNA]</scope>
    <source>
        <strain>ATCC 29579 / DSM 644 / CCUG 34227 / NCIMB 8303 / VKM B-1760 / Hildenborough</strain>
    </source>
</reference>
<protein>
    <recommendedName>
        <fullName evidence="2">Formamidopyrimidine-DNA glycosylase</fullName>
        <shortName evidence="2">Fapy-DNA glycosylase</shortName>
        <ecNumber evidence="2">3.2.2.23</ecNumber>
    </recommendedName>
    <alternativeName>
        <fullName evidence="2">DNA-(apurinic or apyrimidinic site) lyase MutM</fullName>
        <shortName evidence="2">AP lyase MutM</shortName>
        <ecNumber evidence="2">4.2.99.18</ecNumber>
    </alternativeName>
</protein>
<sequence length="365" mass="39011">MPELPEVETIACGLRPALSGRRIVGVTVHNPGTLEGPLCTPAAFTEAVQGQRIADVGRRGKLLLVAFASLPPVGHAGQPRPEGLSSSTVRDFLVTHGFHAAGCATSVHACAPLLADGQQTRGRLAGHGDGMDGTSRTGSTLPGTGGTENSDAVAVADDDTVLGLAFHLKMTGRLFIHPPATPAGIHTRVVFDLEGGTRLFFDDARKFGYVRCITRRSLALWPFWRDLGPEPLETEARGFAARLARRRGRIKALLLDQKVVAGVGNIYADESLFRAGIRPDTQAHTLTPERLFALHGHLQDVLRESIAECGSSIRDYRDAHGDAGAFQNSFRVYGRGGQPCRHCGTTLATAQVAGRTTVFCPQCQR</sequence>
<gene>
    <name evidence="2" type="primary">mutM</name>
    <name evidence="2" type="synonym">fpg</name>
    <name type="ordered locus">DVU_3256</name>
</gene>
<feature type="initiator methionine" description="Removed" evidence="1">
    <location>
        <position position="1"/>
    </location>
</feature>
<feature type="chain" id="PRO_0000228431" description="Formamidopyrimidine-DNA glycosylase">
    <location>
        <begin position="2"/>
        <end position="365"/>
    </location>
</feature>
<feature type="zinc finger region" description="FPG-type" evidence="2">
    <location>
        <begin position="331"/>
        <end position="365"/>
    </location>
</feature>
<feature type="region of interest" description="Disordered" evidence="3">
    <location>
        <begin position="121"/>
        <end position="150"/>
    </location>
</feature>
<feature type="compositionally biased region" description="Polar residues" evidence="3">
    <location>
        <begin position="134"/>
        <end position="150"/>
    </location>
</feature>
<feature type="active site" description="Schiff-base intermediate with DNA" evidence="2">
    <location>
        <position position="2"/>
    </location>
</feature>
<feature type="active site" description="Proton donor" evidence="2">
    <location>
        <position position="3"/>
    </location>
</feature>
<feature type="active site" description="Proton donor; for beta-elimination activity" evidence="2">
    <location>
        <position position="61"/>
    </location>
</feature>
<feature type="active site" description="Proton donor; for delta-elimination activity" evidence="2">
    <location>
        <position position="355"/>
    </location>
</feature>
<feature type="binding site" evidence="2">
    <location>
        <position position="186"/>
    </location>
    <ligand>
        <name>DNA</name>
        <dbReference type="ChEBI" id="CHEBI:16991"/>
    </ligand>
</feature>
<feature type="binding site" evidence="2">
    <location>
        <position position="205"/>
    </location>
    <ligand>
        <name>DNA</name>
        <dbReference type="ChEBI" id="CHEBI:16991"/>
    </ligand>
</feature>
<feature type="binding site" evidence="2">
    <location>
        <position position="246"/>
    </location>
    <ligand>
        <name>DNA</name>
        <dbReference type="ChEBI" id="CHEBI:16991"/>
    </ligand>
</feature>
<comment type="function">
    <text evidence="2">Involved in base excision repair of DNA damaged by oxidation or by mutagenic agents. Acts as a DNA glycosylase that recognizes and removes damaged bases. Has a preference for oxidized purines, such as 7,8-dihydro-8-oxoguanine (8-oxoG). Has AP (apurinic/apyrimidinic) lyase activity and introduces nicks in the DNA strand. Cleaves the DNA backbone by beta-delta elimination to generate a single-strand break at the site of the removed base with both 3'- and 5'-phosphates.</text>
</comment>
<comment type="catalytic activity">
    <reaction evidence="2">
        <text>Hydrolysis of DNA containing ring-opened 7-methylguanine residues, releasing 2,6-diamino-4-hydroxy-5-(N-methyl)formamidopyrimidine.</text>
        <dbReference type="EC" id="3.2.2.23"/>
    </reaction>
</comment>
<comment type="catalytic activity">
    <reaction evidence="2">
        <text>2'-deoxyribonucleotide-(2'-deoxyribose 5'-phosphate)-2'-deoxyribonucleotide-DNA = a 3'-end 2'-deoxyribonucleotide-(2,3-dehydro-2,3-deoxyribose 5'-phosphate)-DNA + a 5'-end 5'-phospho-2'-deoxyribonucleoside-DNA + H(+)</text>
        <dbReference type="Rhea" id="RHEA:66592"/>
        <dbReference type="Rhea" id="RHEA-COMP:13180"/>
        <dbReference type="Rhea" id="RHEA-COMP:16897"/>
        <dbReference type="Rhea" id="RHEA-COMP:17067"/>
        <dbReference type="ChEBI" id="CHEBI:15378"/>
        <dbReference type="ChEBI" id="CHEBI:136412"/>
        <dbReference type="ChEBI" id="CHEBI:157695"/>
        <dbReference type="ChEBI" id="CHEBI:167181"/>
        <dbReference type="EC" id="4.2.99.18"/>
    </reaction>
</comment>
<comment type="cofactor">
    <cofactor evidence="2">
        <name>Zn(2+)</name>
        <dbReference type="ChEBI" id="CHEBI:29105"/>
    </cofactor>
    <text evidence="2">Binds 1 zinc ion per subunit.</text>
</comment>
<comment type="subunit">
    <text evidence="2">Monomer.</text>
</comment>
<comment type="similarity">
    <text evidence="2">Belongs to the FPG family.</text>
</comment>
<evidence type="ECO:0000250" key="1"/>
<evidence type="ECO:0000255" key="2">
    <source>
        <dbReference type="HAMAP-Rule" id="MF_00103"/>
    </source>
</evidence>
<evidence type="ECO:0000256" key="3">
    <source>
        <dbReference type="SAM" id="MobiDB-lite"/>
    </source>
</evidence>
<proteinExistence type="inferred from homology"/>
<organism>
    <name type="scientific">Nitratidesulfovibrio vulgaris (strain ATCC 29579 / DSM 644 / CCUG 34227 / NCIMB 8303 / VKM B-1760 / Hildenborough)</name>
    <name type="common">Desulfovibrio vulgaris</name>
    <dbReference type="NCBI Taxonomy" id="882"/>
    <lineage>
        <taxon>Bacteria</taxon>
        <taxon>Pseudomonadati</taxon>
        <taxon>Thermodesulfobacteriota</taxon>
        <taxon>Desulfovibrionia</taxon>
        <taxon>Desulfovibrionales</taxon>
        <taxon>Desulfovibrionaceae</taxon>
        <taxon>Nitratidesulfovibrio</taxon>
    </lineage>
</organism>
<keyword id="KW-0227">DNA damage</keyword>
<keyword id="KW-0234">DNA repair</keyword>
<keyword id="KW-0238">DNA-binding</keyword>
<keyword id="KW-0326">Glycosidase</keyword>
<keyword id="KW-0378">Hydrolase</keyword>
<keyword id="KW-0456">Lyase</keyword>
<keyword id="KW-0479">Metal-binding</keyword>
<keyword id="KW-0511">Multifunctional enzyme</keyword>
<keyword id="KW-1185">Reference proteome</keyword>
<keyword id="KW-0862">Zinc</keyword>
<keyword id="KW-0863">Zinc-finger</keyword>
<name>FPG_NITV2</name>
<accession>Q726D5</accession>
<dbReference type="EC" id="3.2.2.23" evidence="2"/>
<dbReference type="EC" id="4.2.99.18" evidence="2"/>
<dbReference type="EMBL" id="AE017285">
    <property type="protein sequence ID" value="AAS97726.1"/>
    <property type="molecule type" value="Genomic_DNA"/>
</dbReference>
<dbReference type="RefSeq" id="WP_010940514.1">
    <property type="nucleotide sequence ID" value="NC_002937.3"/>
</dbReference>
<dbReference type="RefSeq" id="YP_012466.1">
    <property type="nucleotide sequence ID" value="NC_002937.3"/>
</dbReference>
<dbReference type="SMR" id="Q726D5"/>
<dbReference type="STRING" id="882.DVU_3256"/>
<dbReference type="PaxDb" id="882-DVU_3256"/>
<dbReference type="EnsemblBacteria" id="AAS97726">
    <property type="protein sequence ID" value="AAS97726"/>
    <property type="gene ID" value="DVU_3256"/>
</dbReference>
<dbReference type="KEGG" id="dvu:DVU_3256"/>
<dbReference type="PATRIC" id="fig|882.5.peg.2961"/>
<dbReference type="eggNOG" id="COG0266">
    <property type="taxonomic scope" value="Bacteria"/>
</dbReference>
<dbReference type="HOGENOM" id="CLU_038423_1_2_7"/>
<dbReference type="OrthoDB" id="9800855at2"/>
<dbReference type="PhylomeDB" id="Q726D5"/>
<dbReference type="Proteomes" id="UP000002194">
    <property type="component" value="Chromosome"/>
</dbReference>
<dbReference type="GO" id="GO:0034039">
    <property type="term" value="F:8-oxo-7,8-dihydroguanine DNA N-glycosylase activity"/>
    <property type="evidence" value="ECO:0007669"/>
    <property type="project" value="TreeGrafter"/>
</dbReference>
<dbReference type="GO" id="GO:0140078">
    <property type="term" value="F:class I DNA-(apurinic or apyrimidinic site) endonuclease activity"/>
    <property type="evidence" value="ECO:0007669"/>
    <property type="project" value="UniProtKB-EC"/>
</dbReference>
<dbReference type="GO" id="GO:0003684">
    <property type="term" value="F:damaged DNA binding"/>
    <property type="evidence" value="ECO:0007669"/>
    <property type="project" value="InterPro"/>
</dbReference>
<dbReference type="GO" id="GO:0008270">
    <property type="term" value="F:zinc ion binding"/>
    <property type="evidence" value="ECO:0007669"/>
    <property type="project" value="UniProtKB-UniRule"/>
</dbReference>
<dbReference type="GO" id="GO:0006284">
    <property type="term" value="P:base-excision repair"/>
    <property type="evidence" value="ECO:0007669"/>
    <property type="project" value="InterPro"/>
</dbReference>
<dbReference type="CDD" id="cd08966">
    <property type="entry name" value="EcFpg-like_N"/>
    <property type="match status" value="1"/>
</dbReference>
<dbReference type="FunFam" id="1.10.8.50:FF:000003">
    <property type="entry name" value="Formamidopyrimidine-DNA glycosylase"/>
    <property type="match status" value="1"/>
</dbReference>
<dbReference type="Gene3D" id="1.10.8.50">
    <property type="match status" value="1"/>
</dbReference>
<dbReference type="Gene3D" id="3.20.190.10">
    <property type="entry name" value="MutM-like, N-terminal"/>
    <property type="match status" value="2"/>
</dbReference>
<dbReference type="HAMAP" id="MF_00103">
    <property type="entry name" value="Fapy_DNA_glycosyl"/>
    <property type="match status" value="1"/>
</dbReference>
<dbReference type="InterPro" id="IPR015886">
    <property type="entry name" value="DNA_glyclase/AP_lyase_DNA-bd"/>
</dbReference>
<dbReference type="InterPro" id="IPR015887">
    <property type="entry name" value="DNA_glyclase_Znf_dom_DNA_BS"/>
</dbReference>
<dbReference type="InterPro" id="IPR020629">
    <property type="entry name" value="Formamido-pyr_DNA_Glyclase"/>
</dbReference>
<dbReference type="InterPro" id="IPR012319">
    <property type="entry name" value="FPG_cat"/>
</dbReference>
<dbReference type="InterPro" id="IPR035937">
    <property type="entry name" value="MutM-like_N-ter"/>
</dbReference>
<dbReference type="InterPro" id="IPR010979">
    <property type="entry name" value="Ribosomal_uS13-like_H2TH"/>
</dbReference>
<dbReference type="InterPro" id="IPR000214">
    <property type="entry name" value="Znf_DNA_glyclase/AP_lyase"/>
</dbReference>
<dbReference type="InterPro" id="IPR010663">
    <property type="entry name" value="Znf_FPG/IleRS"/>
</dbReference>
<dbReference type="NCBIfam" id="TIGR00577">
    <property type="entry name" value="fpg"/>
    <property type="match status" value="1"/>
</dbReference>
<dbReference type="NCBIfam" id="NF002211">
    <property type="entry name" value="PRK01103.1"/>
    <property type="match status" value="1"/>
</dbReference>
<dbReference type="PANTHER" id="PTHR22993">
    <property type="entry name" value="FORMAMIDOPYRIMIDINE-DNA GLYCOSYLASE"/>
    <property type="match status" value="1"/>
</dbReference>
<dbReference type="PANTHER" id="PTHR22993:SF9">
    <property type="entry name" value="FORMAMIDOPYRIMIDINE-DNA GLYCOSYLASE"/>
    <property type="match status" value="1"/>
</dbReference>
<dbReference type="Pfam" id="PF01149">
    <property type="entry name" value="Fapy_DNA_glyco"/>
    <property type="match status" value="2"/>
</dbReference>
<dbReference type="Pfam" id="PF06831">
    <property type="entry name" value="H2TH"/>
    <property type="match status" value="1"/>
</dbReference>
<dbReference type="Pfam" id="PF06827">
    <property type="entry name" value="zf-FPG_IleRS"/>
    <property type="match status" value="1"/>
</dbReference>
<dbReference type="SMART" id="SM00898">
    <property type="entry name" value="Fapy_DNA_glyco"/>
    <property type="match status" value="1"/>
</dbReference>
<dbReference type="SMART" id="SM01232">
    <property type="entry name" value="H2TH"/>
    <property type="match status" value="1"/>
</dbReference>
<dbReference type="SUPFAM" id="SSF57716">
    <property type="entry name" value="Glucocorticoid receptor-like (DNA-binding domain)"/>
    <property type="match status" value="1"/>
</dbReference>
<dbReference type="SUPFAM" id="SSF81624">
    <property type="entry name" value="N-terminal domain of MutM-like DNA repair proteins"/>
    <property type="match status" value="2"/>
</dbReference>
<dbReference type="SUPFAM" id="SSF46946">
    <property type="entry name" value="S13-like H2TH domain"/>
    <property type="match status" value="1"/>
</dbReference>
<dbReference type="PROSITE" id="PS51068">
    <property type="entry name" value="FPG_CAT"/>
    <property type="match status" value="1"/>
</dbReference>
<dbReference type="PROSITE" id="PS01242">
    <property type="entry name" value="ZF_FPG_1"/>
    <property type="match status" value="1"/>
</dbReference>
<dbReference type="PROSITE" id="PS51066">
    <property type="entry name" value="ZF_FPG_2"/>
    <property type="match status" value="1"/>
</dbReference>